<reference key="1">
    <citation type="submission" date="2006-09" db="EMBL/GenBank/DDBJ databases">
        <title>Complete sequence of Rhodopseudomonas palustris BisA53.</title>
        <authorList>
            <consortium name="US DOE Joint Genome Institute"/>
            <person name="Copeland A."/>
            <person name="Lucas S."/>
            <person name="Lapidus A."/>
            <person name="Barry K."/>
            <person name="Detter J.C."/>
            <person name="Glavina del Rio T."/>
            <person name="Hammon N."/>
            <person name="Israni S."/>
            <person name="Dalin E."/>
            <person name="Tice H."/>
            <person name="Pitluck S."/>
            <person name="Chain P."/>
            <person name="Malfatti S."/>
            <person name="Shin M."/>
            <person name="Vergez L."/>
            <person name="Schmutz J."/>
            <person name="Larimer F."/>
            <person name="Land M."/>
            <person name="Hauser L."/>
            <person name="Pelletier D.A."/>
            <person name="Kyrpides N."/>
            <person name="Kim E."/>
            <person name="Harwood C.S."/>
            <person name="Oda Y."/>
            <person name="Richardson P."/>
        </authorList>
    </citation>
    <scope>NUCLEOTIDE SEQUENCE [LARGE SCALE GENOMIC DNA]</scope>
    <source>
        <strain>BisA53</strain>
    </source>
</reference>
<comment type="function">
    <text evidence="1">The beta subunit is responsible for the synthesis of L-tryptophan from indole and L-serine.</text>
</comment>
<comment type="catalytic activity">
    <reaction evidence="1">
        <text>(1S,2R)-1-C-(indol-3-yl)glycerol 3-phosphate + L-serine = D-glyceraldehyde 3-phosphate + L-tryptophan + H2O</text>
        <dbReference type="Rhea" id="RHEA:10532"/>
        <dbReference type="ChEBI" id="CHEBI:15377"/>
        <dbReference type="ChEBI" id="CHEBI:33384"/>
        <dbReference type="ChEBI" id="CHEBI:57912"/>
        <dbReference type="ChEBI" id="CHEBI:58866"/>
        <dbReference type="ChEBI" id="CHEBI:59776"/>
        <dbReference type="EC" id="4.2.1.20"/>
    </reaction>
</comment>
<comment type="cofactor">
    <cofactor evidence="1">
        <name>pyridoxal 5'-phosphate</name>
        <dbReference type="ChEBI" id="CHEBI:597326"/>
    </cofactor>
</comment>
<comment type="pathway">
    <text evidence="1">Amino-acid biosynthesis; L-tryptophan biosynthesis; L-tryptophan from chorismate: step 5/5.</text>
</comment>
<comment type="subunit">
    <text evidence="1">Tetramer of two alpha and two beta chains.</text>
</comment>
<comment type="similarity">
    <text evidence="1">Belongs to the TrpB family.</text>
</comment>
<sequence>MNSPLPNSYRSGPDDRGHFGLFGGRFVAETLMPLILDLEKAYAEAKIDPAFRAEMDGHLKHYVGRPSPLYFAERLTDHFGGAKIYFKREDLNHTGAHKVNNVLGQIMLARRMGKPRIIAETGAGMHGVATATLCAKFGLKCVVFMGAVDIDRQEPNVLRMKALGAEVRPVTSGAATLKDAMNEALRDWVTNVHDTFYCIGTVAGPHPYPMMVRDFQSVIGHEVREQIMQLEGRLPDSLIACIGGGSNAMGLFHPFLDDPEVAIYGVEAAGHGLSKLHAASIAGGKPGVLHGNRTYLLMDGDGQIQEAHSISAGLDYPGIGPEHAWLHDVGRVNFLSATDTEALDAFKLCCRLEGIIPALEPSHALAKVADLAPKLPKDHLMVLNMSGRGDKDLASVAEHLGGQF</sequence>
<evidence type="ECO:0000255" key="1">
    <source>
        <dbReference type="HAMAP-Rule" id="MF_00133"/>
    </source>
</evidence>
<organism>
    <name type="scientific">Rhodopseudomonas palustris (strain BisA53)</name>
    <dbReference type="NCBI Taxonomy" id="316055"/>
    <lineage>
        <taxon>Bacteria</taxon>
        <taxon>Pseudomonadati</taxon>
        <taxon>Pseudomonadota</taxon>
        <taxon>Alphaproteobacteria</taxon>
        <taxon>Hyphomicrobiales</taxon>
        <taxon>Nitrobacteraceae</taxon>
        <taxon>Rhodopseudomonas</taxon>
    </lineage>
</organism>
<proteinExistence type="inferred from homology"/>
<protein>
    <recommendedName>
        <fullName evidence="1">Tryptophan synthase beta chain</fullName>
        <ecNumber evidence="1">4.2.1.20</ecNumber>
    </recommendedName>
</protein>
<dbReference type="EC" id="4.2.1.20" evidence="1"/>
<dbReference type="EMBL" id="CP000463">
    <property type="protein sequence ID" value="ABJ04413.1"/>
    <property type="molecule type" value="Genomic_DNA"/>
</dbReference>
<dbReference type="SMR" id="Q07UH1"/>
<dbReference type="STRING" id="316055.RPE_0454"/>
<dbReference type="KEGG" id="rpe:RPE_0454"/>
<dbReference type="eggNOG" id="COG0133">
    <property type="taxonomic scope" value="Bacteria"/>
</dbReference>
<dbReference type="HOGENOM" id="CLU_016734_3_1_5"/>
<dbReference type="OrthoDB" id="9766131at2"/>
<dbReference type="UniPathway" id="UPA00035">
    <property type="reaction ID" value="UER00044"/>
</dbReference>
<dbReference type="GO" id="GO:0005737">
    <property type="term" value="C:cytoplasm"/>
    <property type="evidence" value="ECO:0007669"/>
    <property type="project" value="TreeGrafter"/>
</dbReference>
<dbReference type="GO" id="GO:0004834">
    <property type="term" value="F:tryptophan synthase activity"/>
    <property type="evidence" value="ECO:0007669"/>
    <property type="project" value="UniProtKB-UniRule"/>
</dbReference>
<dbReference type="CDD" id="cd06446">
    <property type="entry name" value="Trp-synth_B"/>
    <property type="match status" value="1"/>
</dbReference>
<dbReference type="FunFam" id="3.40.50.1100:FF:000001">
    <property type="entry name" value="Tryptophan synthase beta chain"/>
    <property type="match status" value="1"/>
</dbReference>
<dbReference type="FunFam" id="3.40.50.1100:FF:000004">
    <property type="entry name" value="Tryptophan synthase beta chain"/>
    <property type="match status" value="1"/>
</dbReference>
<dbReference type="Gene3D" id="3.40.50.1100">
    <property type="match status" value="2"/>
</dbReference>
<dbReference type="HAMAP" id="MF_00133">
    <property type="entry name" value="Trp_synth_beta"/>
    <property type="match status" value="1"/>
</dbReference>
<dbReference type="InterPro" id="IPR006653">
    <property type="entry name" value="Trp_synth_b_CS"/>
</dbReference>
<dbReference type="InterPro" id="IPR006654">
    <property type="entry name" value="Trp_synth_beta"/>
</dbReference>
<dbReference type="InterPro" id="IPR023026">
    <property type="entry name" value="Trp_synth_beta/beta-like"/>
</dbReference>
<dbReference type="InterPro" id="IPR001926">
    <property type="entry name" value="TrpB-like_PALP"/>
</dbReference>
<dbReference type="InterPro" id="IPR036052">
    <property type="entry name" value="TrpB-like_PALP_sf"/>
</dbReference>
<dbReference type="NCBIfam" id="TIGR00263">
    <property type="entry name" value="trpB"/>
    <property type="match status" value="1"/>
</dbReference>
<dbReference type="PANTHER" id="PTHR48077:SF3">
    <property type="entry name" value="TRYPTOPHAN SYNTHASE"/>
    <property type="match status" value="1"/>
</dbReference>
<dbReference type="PANTHER" id="PTHR48077">
    <property type="entry name" value="TRYPTOPHAN SYNTHASE-RELATED"/>
    <property type="match status" value="1"/>
</dbReference>
<dbReference type="Pfam" id="PF00291">
    <property type="entry name" value="PALP"/>
    <property type="match status" value="1"/>
</dbReference>
<dbReference type="PIRSF" id="PIRSF001413">
    <property type="entry name" value="Trp_syn_beta"/>
    <property type="match status" value="1"/>
</dbReference>
<dbReference type="SUPFAM" id="SSF53686">
    <property type="entry name" value="Tryptophan synthase beta subunit-like PLP-dependent enzymes"/>
    <property type="match status" value="1"/>
</dbReference>
<dbReference type="PROSITE" id="PS00168">
    <property type="entry name" value="TRP_SYNTHASE_BETA"/>
    <property type="match status" value="1"/>
</dbReference>
<gene>
    <name evidence="1" type="primary">trpB</name>
    <name type="ordered locus">RPE_0454</name>
</gene>
<feature type="chain" id="PRO_1000095810" description="Tryptophan synthase beta chain">
    <location>
        <begin position="1"/>
        <end position="404"/>
    </location>
</feature>
<feature type="modified residue" description="N6-(pyridoxal phosphate)lysine" evidence="1">
    <location>
        <position position="98"/>
    </location>
</feature>
<accession>Q07UH1</accession>
<keyword id="KW-0028">Amino-acid biosynthesis</keyword>
<keyword id="KW-0057">Aromatic amino acid biosynthesis</keyword>
<keyword id="KW-0456">Lyase</keyword>
<keyword id="KW-0663">Pyridoxal phosphate</keyword>
<keyword id="KW-0822">Tryptophan biosynthesis</keyword>
<name>TRPB_RHOP5</name>